<proteinExistence type="inferred from homology"/>
<gene>
    <name type="primary">OR4F5</name>
</gene>
<feature type="chain" id="PRO_0000150547" description="Olfactory receptor 4F5">
    <location>
        <begin position="1"/>
        <end position="305"/>
    </location>
</feature>
<feature type="topological domain" description="Extracellular" evidence="1">
    <location>
        <begin position="1"/>
        <end position="18"/>
    </location>
</feature>
<feature type="transmembrane region" description="Helical; Name=1" evidence="1">
    <location>
        <begin position="19"/>
        <end position="42"/>
    </location>
</feature>
<feature type="topological domain" description="Cytoplasmic" evidence="1">
    <location>
        <begin position="43"/>
        <end position="50"/>
    </location>
</feature>
<feature type="transmembrane region" description="Helical; Name=2" evidence="1">
    <location>
        <begin position="51"/>
        <end position="72"/>
    </location>
</feature>
<feature type="topological domain" description="Extracellular" evidence="1">
    <location>
        <begin position="73"/>
        <end position="93"/>
    </location>
</feature>
<feature type="transmembrane region" description="Helical; Name=3" evidence="1">
    <location>
        <begin position="94"/>
        <end position="113"/>
    </location>
</feature>
<feature type="topological domain" description="Cytoplasmic" evidence="1">
    <location>
        <begin position="114"/>
        <end position="132"/>
    </location>
</feature>
<feature type="transmembrane region" description="Helical; Name=4" evidence="1">
    <location>
        <begin position="133"/>
        <end position="151"/>
    </location>
</feature>
<feature type="topological domain" description="Extracellular" evidence="1">
    <location>
        <begin position="152"/>
        <end position="188"/>
    </location>
</feature>
<feature type="transmembrane region" description="Helical; Name=5" evidence="1">
    <location>
        <begin position="189"/>
        <end position="212"/>
    </location>
</feature>
<feature type="topological domain" description="Cytoplasmic" evidence="1">
    <location>
        <begin position="213"/>
        <end position="228"/>
    </location>
</feature>
<feature type="transmembrane region" description="Helical; Name=6" evidence="1">
    <location>
        <begin position="229"/>
        <end position="251"/>
    </location>
</feature>
<feature type="topological domain" description="Extracellular" evidence="1">
    <location>
        <begin position="252"/>
        <end position="262"/>
    </location>
</feature>
<feature type="transmembrane region" description="Helical; Name=7" evidence="1">
    <location>
        <begin position="263"/>
        <end position="282"/>
    </location>
</feature>
<feature type="topological domain" description="Cytoplasmic" evidence="1">
    <location>
        <begin position="283"/>
        <end position="305"/>
    </location>
</feature>
<feature type="disulfide bond" evidence="2">
    <location>
        <begin position="90"/>
        <end position="182"/>
    </location>
</feature>
<name>OR4F5_HUMAN</name>
<dbReference type="EMBL" id="AB065592">
    <property type="protein sequence ID" value="BAC05820.1"/>
    <property type="molecule type" value="Genomic_DNA"/>
</dbReference>
<dbReference type="EMBL" id="AL627309">
    <property type="status" value="NOT_ANNOTATED_CDS"/>
    <property type="molecule type" value="Genomic_DNA"/>
</dbReference>
<dbReference type="RefSeq" id="NP_001005484.1">
    <property type="nucleotide sequence ID" value="NM_001005484.1"/>
</dbReference>
<dbReference type="SMR" id="Q8NH21"/>
<dbReference type="FunCoup" id="Q8NH21">
    <property type="interactions" value="416"/>
</dbReference>
<dbReference type="STRING" id="9606.ENSP00000334393"/>
<dbReference type="iPTMnet" id="Q8NH21"/>
<dbReference type="PhosphoSitePlus" id="Q8NH21"/>
<dbReference type="BioMuta" id="OR4F5"/>
<dbReference type="DMDM" id="38372801"/>
<dbReference type="PaxDb" id="9606-ENSP00000334393"/>
<dbReference type="Antibodypedia" id="58296">
    <property type="antibodies" value="60 antibodies from 15 providers"/>
</dbReference>
<dbReference type="DNASU" id="79501"/>
<dbReference type="GeneID" id="79501"/>
<dbReference type="KEGG" id="hsa:79501"/>
<dbReference type="UCSC" id="uc001aal.1">
    <property type="organism name" value="human"/>
</dbReference>
<dbReference type="AGR" id="HGNC:14825"/>
<dbReference type="CTD" id="79501"/>
<dbReference type="GeneCards" id="OR4F5"/>
<dbReference type="HGNC" id="HGNC:14825">
    <property type="gene designation" value="OR4F5"/>
</dbReference>
<dbReference type="neXtProt" id="NX_Q8NH21"/>
<dbReference type="PharmGKB" id="PA32291"/>
<dbReference type="VEuPathDB" id="HostDB:ENSG00000186092"/>
<dbReference type="eggNOG" id="ENOG502SKZV">
    <property type="taxonomic scope" value="Eukaryota"/>
</dbReference>
<dbReference type="HOGENOM" id="CLU_012526_8_1_1"/>
<dbReference type="InParanoid" id="Q8NH21"/>
<dbReference type="OMA" id="VISIKGC"/>
<dbReference type="OrthoDB" id="10254436at2759"/>
<dbReference type="PAN-GO" id="Q8NH21">
    <property type="GO annotations" value="2 GO annotations based on evolutionary models"/>
</dbReference>
<dbReference type="PhylomeDB" id="Q8NH21"/>
<dbReference type="TreeFam" id="TF337251"/>
<dbReference type="PathwayCommons" id="Q8NH21"/>
<dbReference type="Reactome" id="R-HSA-9752946">
    <property type="pathway name" value="Expression and translocation of olfactory receptors"/>
</dbReference>
<dbReference type="BioGRID-ORCS" id="79501">
    <property type="hits" value="16 hits in 636 CRISPR screens"/>
</dbReference>
<dbReference type="ChiTaRS" id="OR4F5">
    <property type="organism name" value="human"/>
</dbReference>
<dbReference type="GenomeRNAi" id="79501"/>
<dbReference type="Pharos" id="Q8NH21">
    <property type="development level" value="Tdark"/>
</dbReference>
<dbReference type="PRO" id="PR:Q8NH21"/>
<dbReference type="Proteomes" id="UP000005640">
    <property type="component" value="Chromosome 1"/>
</dbReference>
<dbReference type="RNAct" id="Q8NH21">
    <property type="molecule type" value="protein"/>
</dbReference>
<dbReference type="GO" id="GO:0005886">
    <property type="term" value="C:plasma membrane"/>
    <property type="evidence" value="ECO:0007669"/>
    <property type="project" value="UniProtKB-SubCell"/>
</dbReference>
<dbReference type="GO" id="GO:0004930">
    <property type="term" value="F:G protein-coupled receptor activity"/>
    <property type="evidence" value="ECO:0007669"/>
    <property type="project" value="UniProtKB-KW"/>
</dbReference>
<dbReference type="GO" id="GO:0004984">
    <property type="term" value="F:olfactory receptor activity"/>
    <property type="evidence" value="ECO:0000318"/>
    <property type="project" value="GO_Central"/>
</dbReference>
<dbReference type="CDD" id="cd15226">
    <property type="entry name" value="7tmA_OR4-like"/>
    <property type="match status" value="1"/>
</dbReference>
<dbReference type="FunFam" id="1.20.1070.10:FF:000012">
    <property type="entry name" value="Olfactory receptor"/>
    <property type="match status" value="1"/>
</dbReference>
<dbReference type="Gene3D" id="1.20.1070.10">
    <property type="entry name" value="Rhodopsin 7-helix transmembrane proteins"/>
    <property type="match status" value="1"/>
</dbReference>
<dbReference type="InterPro" id="IPR000276">
    <property type="entry name" value="GPCR_Rhodpsn"/>
</dbReference>
<dbReference type="InterPro" id="IPR017452">
    <property type="entry name" value="GPCR_Rhodpsn_7TM"/>
</dbReference>
<dbReference type="InterPro" id="IPR000725">
    <property type="entry name" value="Olfact_rcpt"/>
</dbReference>
<dbReference type="InterPro" id="IPR050427">
    <property type="entry name" value="Olfactory_Receptors"/>
</dbReference>
<dbReference type="PANTHER" id="PTHR48002">
    <property type="entry name" value="OLFACTORY RECEPTOR"/>
    <property type="match status" value="1"/>
</dbReference>
<dbReference type="Pfam" id="PF13853">
    <property type="entry name" value="7tm_4"/>
    <property type="match status" value="1"/>
</dbReference>
<dbReference type="PRINTS" id="PR00237">
    <property type="entry name" value="GPCRRHODOPSN"/>
</dbReference>
<dbReference type="PRINTS" id="PR00245">
    <property type="entry name" value="OLFACTORYR"/>
</dbReference>
<dbReference type="SUPFAM" id="SSF81321">
    <property type="entry name" value="Family A G protein-coupled receptor-like"/>
    <property type="match status" value="1"/>
</dbReference>
<dbReference type="PROSITE" id="PS00237">
    <property type="entry name" value="G_PROTEIN_RECEP_F1_1"/>
    <property type="match status" value="1"/>
</dbReference>
<dbReference type="PROSITE" id="PS50262">
    <property type="entry name" value="G_PROTEIN_RECEP_F1_2"/>
    <property type="match status" value="1"/>
</dbReference>
<organism>
    <name type="scientific">Homo sapiens</name>
    <name type="common">Human</name>
    <dbReference type="NCBI Taxonomy" id="9606"/>
    <lineage>
        <taxon>Eukaryota</taxon>
        <taxon>Metazoa</taxon>
        <taxon>Chordata</taxon>
        <taxon>Craniata</taxon>
        <taxon>Vertebrata</taxon>
        <taxon>Euteleostomi</taxon>
        <taxon>Mammalia</taxon>
        <taxon>Eutheria</taxon>
        <taxon>Euarchontoglires</taxon>
        <taxon>Primates</taxon>
        <taxon>Haplorrhini</taxon>
        <taxon>Catarrhini</taxon>
        <taxon>Hominidae</taxon>
        <taxon>Homo</taxon>
    </lineage>
</organism>
<reference key="1">
    <citation type="submission" date="2001-07" db="EMBL/GenBank/DDBJ databases">
        <title>Genome-wide discovery and analysis of human seven transmembrane helix receptor genes.</title>
        <authorList>
            <person name="Suwa M."/>
            <person name="Sato T."/>
            <person name="Okouchi I."/>
            <person name="Arita M."/>
            <person name="Futami K."/>
            <person name="Matsumoto S."/>
            <person name="Tsutsumi S."/>
            <person name="Aburatani H."/>
            <person name="Asai K."/>
            <person name="Akiyama Y."/>
        </authorList>
    </citation>
    <scope>NUCLEOTIDE SEQUENCE [GENOMIC DNA]</scope>
</reference>
<reference key="2">
    <citation type="journal article" date="2006" name="Nature">
        <title>The DNA sequence and biological annotation of human chromosome 1.</title>
        <authorList>
            <person name="Gregory S.G."/>
            <person name="Barlow K.F."/>
            <person name="McLay K.E."/>
            <person name="Kaul R."/>
            <person name="Swarbreck D."/>
            <person name="Dunham A."/>
            <person name="Scott C.E."/>
            <person name="Howe K.L."/>
            <person name="Woodfine K."/>
            <person name="Spencer C.C.A."/>
            <person name="Jones M.C."/>
            <person name="Gillson C."/>
            <person name="Searle S."/>
            <person name="Zhou Y."/>
            <person name="Kokocinski F."/>
            <person name="McDonald L."/>
            <person name="Evans R."/>
            <person name="Phillips K."/>
            <person name="Atkinson A."/>
            <person name="Cooper R."/>
            <person name="Jones C."/>
            <person name="Hall R.E."/>
            <person name="Andrews T.D."/>
            <person name="Lloyd C."/>
            <person name="Ainscough R."/>
            <person name="Almeida J.P."/>
            <person name="Ambrose K.D."/>
            <person name="Anderson F."/>
            <person name="Andrew R.W."/>
            <person name="Ashwell R.I.S."/>
            <person name="Aubin K."/>
            <person name="Babbage A.K."/>
            <person name="Bagguley C.L."/>
            <person name="Bailey J."/>
            <person name="Beasley H."/>
            <person name="Bethel G."/>
            <person name="Bird C.P."/>
            <person name="Bray-Allen S."/>
            <person name="Brown J.Y."/>
            <person name="Brown A.J."/>
            <person name="Buckley D."/>
            <person name="Burton J."/>
            <person name="Bye J."/>
            <person name="Carder C."/>
            <person name="Chapman J.C."/>
            <person name="Clark S.Y."/>
            <person name="Clarke G."/>
            <person name="Clee C."/>
            <person name="Cobley V."/>
            <person name="Collier R.E."/>
            <person name="Corby N."/>
            <person name="Coville G.J."/>
            <person name="Davies J."/>
            <person name="Deadman R."/>
            <person name="Dunn M."/>
            <person name="Earthrowl M."/>
            <person name="Ellington A.G."/>
            <person name="Errington H."/>
            <person name="Frankish A."/>
            <person name="Frankland J."/>
            <person name="French L."/>
            <person name="Garner P."/>
            <person name="Garnett J."/>
            <person name="Gay L."/>
            <person name="Ghori M.R.J."/>
            <person name="Gibson R."/>
            <person name="Gilby L.M."/>
            <person name="Gillett W."/>
            <person name="Glithero R.J."/>
            <person name="Grafham D.V."/>
            <person name="Griffiths C."/>
            <person name="Griffiths-Jones S."/>
            <person name="Grocock R."/>
            <person name="Hammond S."/>
            <person name="Harrison E.S.I."/>
            <person name="Hart E."/>
            <person name="Haugen E."/>
            <person name="Heath P.D."/>
            <person name="Holmes S."/>
            <person name="Holt K."/>
            <person name="Howden P.J."/>
            <person name="Hunt A.R."/>
            <person name="Hunt S.E."/>
            <person name="Hunter G."/>
            <person name="Isherwood J."/>
            <person name="James R."/>
            <person name="Johnson C."/>
            <person name="Johnson D."/>
            <person name="Joy A."/>
            <person name="Kay M."/>
            <person name="Kershaw J.K."/>
            <person name="Kibukawa M."/>
            <person name="Kimberley A.M."/>
            <person name="King A."/>
            <person name="Knights A.J."/>
            <person name="Lad H."/>
            <person name="Laird G."/>
            <person name="Lawlor S."/>
            <person name="Leongamornlert D.A."/>
            <person name="Lloyd D.M."/>
            <person name="Loveland J."/>
            <person name="Lovell J."/>
            <person name="Lush M.J."/>
            <person name="Lyne R."/>
            <person name="Martin S."/>
            <person name="Mashreghi-Mohammadi M."/>
            <person name="Matthews L."/>
            <person name="Matthews N.S.W."/>
            <person name="McLaren S."/>
            <person name="Milne S."/>
            <person name="Mistry S."/>
            <person name="Moore M.J.F."/>
            <person name="Nickerson T."/>
            <person name="O'Dell C.N."/>
            <person name="Oliver K."/>
            <person name="Palmeiri A."/>
            <person name="Palmer S.A."/>
            <person name="Parker A."/>
            <person name="Patel D."/>
            <person name="Pearce A.V."/>
            <person name="Peck A.I."/>
            <person name="Pelan S."/>
            <person name="Phelps K."/>
            <person name="Phillimore B.J."/>
            <person name="Plumb R."/>
            <person name="Rajan J."/>
            <person name="Raymond C."/>
            <person name="Rouse G."/>
            <person name="Saenphimmachak C."/>
            <person name="Sehra H.K."/>
            <person name="Sheridan E."/>
            <person name="Shownkeen R."/>
            <person name="Sims S."/>
            <person name="Skuce C.D."/>
            <person name="Smith M."/>
            <person name="Steward C."/>
            <person name="Subramanian S."/>
            <person name="Sycamore N."/>
            <person name="Tracey A."/>
            <person name="Tromans A."/>
            <person name="Van Helmond Z."/>
            <person name="Wall M."/>
            <person name="Wallis J.M."/>
            <person name="White S."/>
            <person name="Whitehead S.L."/>
            <person name="Wilkinson J.E."/>
            <person name="Willey D.L."/>
            <person name="Williams H."/>
            <person name="Wilming L."/>
            <person name="Wray P.W."/>
            <person name="Wu Z."/>
            <person name="Coulson A."/>
            <person name="Vaudin M."/>
            <person name="Sulston J.E."/>
            <person name="Durbin R.M."/>
            <person name="Hubbard T."/>
            <person name="Wooster R."/>
            <person name="Dunham I."/>
            <person name="Carter N.P."/>
            <person name="McVean G."/>
            <person name="Ross M.T."/>
            <person name="Harrow J."/>
            <person name="Olson M.V."/>
            <person name="Beck S."/>
            <person name="Rogers J."/>
            <person name="Bentley D.R."/>
        </authorList>
    </citation>
    <scope>NUCLEOTIDE SEQUENCE [LARGE SCALE GENOMIC DNA]</scope>
</reference>
<comment type="function">
    <text evidence="3">Odorant receptor.</text>
</comment>
<comment type="subcellular location">
    <subcellularLocation>
        <location>Cell membrane</location>
        <topology>Multi-pass membrane protein</topology>
    </subcellularLocation>
</comment>
<comment type="similarity">
    <text evidence="2">Belongs to the G-protein coupled receptor 1 family.</text>
</comment>
<comment type="online information" name="Human Olfactory Receptor Data Exploratorium (HORDE)">
    <link uri="http://genome.weizmann.ac.il/horde/card/index/symbol:OR4F5"/>
</comment>
<evidence type="ECO:0000255" key="1"/>
<evidence type="ECO:0000255" key="2">
    <source>
        <dbReference type="PROSITE-ProRule" id="PRU00521"/>
    </source>
</evidence>
<evidence type="ECO:0000305" key="3"/>
<sequence>MVTEFIFLGLSDSQELQTFLFMLFFVFYGGIVFGNLLIVITVVSDSHLHSPMYFLLANLSLIDLSLSSVTAPKMITDFFSQRKVISFKGCLVQIFLLHFFGGSEMVILIAMGFDRYIAICKPLHYTTIMCGNACVGIMAVTWGIGFLHSVSQLAFAVHLLFCGPNEVDSFYCDLPRVIKLACTDTYRLDIMVIANSGVLTVCSFVLLIISYTIILMTIQHRPLDKSSKALSTLTAHITVVLLFFGPCVFIYAWPFPIKSLDKFLAVFYSVITPLLNPIIYTLRNKDMKTAIRQLRKWDAHSSVKF</sequence>
<keyword id="KW-1003">Cell membrane</keyword>
<keyword id="KW-1015">Disulfide bond</keyword>
<keyword id="KW-0297">G-protein coupled receptor</keyword>
<keyword id="KW-0472">Membrane</keyword>
<keyword id="KW-0552">Olfaction</keyword>
<keyword id="KW-0675">Receptor</keyword>
<keyword id="KW-1185">Reference proteome</keyword>
<keyword id="KW-0716">Sensory transduction</keyword>
<keyword id="KW-0807">Transducer</keyword>
<keyword id="KW-0812">Transmembrane</keyword>
<keyword id="KW-1133">Transmembrane helix</keyword>
<protein>
    <recommendedName>
        <fullName>Olfactory receptor 4F5</fullName>
    </recommendedName>
</protein>
<accession>Q8NH21</accession>
<accession>Q5VT22</accession>